<proteinExistence type="evidence at transcript level"/>
<sequence>MAARKSGSDIHNNGPVSYLDDVPFKLNEKFRCPSKVGLPIGFCLSDCNAILSDLQYDFNLERRTVQWGEELAKARAAEARAAEAIRTDSESERQAASQDAEVGLVGGKKARPSDEQDIVPPALKPVLAGLSHNAILTPLPAPSFGQTRPAPSNPAPQYLNLADFEREEDPFDKLELKTLDDKEELRTILQSQPQSSVSPPQLPPAEHRPVSPSTTPPLQAKTGIFHKPNGLVGLLDLDRGGVLGGQIDADRPCNIRSLTFPKLSDPGDSPLETPLSVYPVAPPRNLSNGTPPSLQRTASNNNTTLPQEQPVFAQNGTPKQSNPVTVTSHPPAGTTLLSLSPSERQCVETIVGMGYSYEGVLKAMQRQGQNVEQVLEYLFTHSRLCDRGFDATAVEECLEMYQGSEEKALEFLQLMSRFGEMGFERDTIKEVLLVHNNDQDKALEDLMTRATAS</sequence>
<evidence type="ECO:0000250" key="1">
    <source>
        <dbReference type="UniProtKB" id="Q9NZ09"/>
    </source>
</evidence>
<evidence type="ECO:0000255" key="2">
    <source>
        <dbReference type="PROSITE-ProRule" id="PRU00212"/>
    </source>
</evidence>
<evidence type="ECO:0000255" key="3">
    <source>
        <dbReference type="PROSITE-ProRule" id="PRU00830"/>
    </source>
</evidence>
<evidence type="ECO:0000256" key="4">
    <source>
        <dbReference type="SAM" id="MobiDB-lite"/>
    </source>
</evidence>
<evidence type="ECO:0000269" key="5">
    <source>
    </source>
</evidence>
<evidence type="ECO:0000269" key="6">
    <source>
    </source>
</evidence>
<evidence type="ECO:0000303" key="7">
    <source>
    </source>
</evidence>
<evidence type="ECO:0000312" key="8">
    <source>
        <dbReference type="ZFIN" id="ZDB-GENE-040426-950"/>
    </source>
</evidence>
<comment type="function">
    <text evidence="1">Component of the ESCRT-I complex, a regulator of vesicular trafficking process. Binds to ubiquitinated cargo proteins and is required for the sorting of endocytic ubiquitinated cargos into multivesicular bodies (MVBs).</text>
</comment>
<comment type="subunit">
    <text evidence="1">Component of an ESCRT-I complex (endosomal sorting complex required for transport I).</text>
</comment>
<comment type="subcellular location">
    <subcellularLocation>
        <location evidence="1">Cytoplasm</location>
        <location evidence="1">Cytosol</location>
    </subcellularLocation>
    <subcellularLocation>
        <location evidence="1">Endosome</location>
    </subcellularLocation>
    <text evidence="1">Predominantly cytosolic. Recruited to endosomes as part of the ESCRT-I complex.</text>
</comment>
<comment type="alternative products">
    <event type="alternative splicing"/>
    <isoform>
        <id>F6P6X0-1</id>
        <name>1</name>
        <sequence type="displayed"/>
    </isoform>
    <isoform>
        <id>F6P6X0-2</id>
        <name>2</name>
        <sequence type="described" ref="VSP_060333"/>
    </isoform>
</comment>
<comment type="domain">
    <text evidence="1">The UMA domain mediates association with the ESCRT-I complex.</text>
</comment>
<comment type="disruption phenotype">
    <text evidence="5 6">Impaired motor neuron outgrowth, leading to decreased mobility and shorter lifespan (PubMed:31203368). Axon lengths is significantly shorter in motor neurons (PubMed:30929741, PubMed:31203368).</text>
</comment>
<keyword id="KW-0025">Alternative splicing</keyword>
<keyword id="KW-0963">Cytoplasm</keyword>
<keyword id="KW-0967">Endosome</keyword>
<keyword id="KW-0653">Protein transport</keyword>
<keyword id="KW-1185">Reference proteome</keyword>
<keyword id="KW-0677">Repeat</keyword>
<keyword id="KW-0813">Transport</keyword>
<accession>F6P6X0</accession>
<accession>Q7ZV44</accession>
<organism>
    <name type="scientific">Danio rerio</name>
    <name type="common">Zebrafish</name>
    <name type="synonym">Brachydanio rerio</name>
    <dbReference type="NCBI Taxonomy" id="7955"/>
    <lineage>
        <taxon>Eukaryota</taxon>
        <taxon>Metazoa</taxon>
        <taxon>Chordata</taxon>
        <taxon>Craniata</taxon>
        <taxon>Vertebrata</taxon>
        <taxon>Euteleostomi</taxon>
        <taxon>Actinopterygii</taxon>
        <taxon>Neopterygii</taxon>
        <taxon>Teleostei</taxon>
        <taxon>Ostariophysi</taxon>
        <taxon>Cypriniformes</taxon>
        <taxon>Danionidae</taxon>
        <taxon>Danioninae</taxon>
        <taxon>Danio</taxon>
    </lineage>
</organism>
<feature type="chain" id="PRO_0000448080" description="Ubiquitin-associated protein 1">
    <location>
        <begin position="1"/>
        <end position="453"/>
    </location>
</feature>
<feature type="domain" description="UMA" evidence="3">
    <location>
        <begin position="19"/>
        <end position="65"/>
    </location>
</feature>
<feature type="domain" description="UBA 1" evidence="2">
    <location>
        <begin position="340"/>
        <end position="381"/>
    </location>
</feature>
<feature type="domain" description="UBA 2" evidence="2">
    <location>
        <begin position="403"/>
        <end position="449"/>
    </location>
</feature>
<feature type="region of interest" description="Disordered" evidence="4">
    <location>
        <begin position="83"/>
        <end position="119"/>
    </location>
</feature>
<feature type="region of interest" description="Disordered" evidence="4">
    <location>
        <begin position="189"/>
        <end position="223"/>
    </location>
</feature>
<feature type="region of interest" description="Disordered" evidence="4">
    <location>
        <begin position="260"/>
        <end position="335"/>
    </location>
</feature>
<feature type="compositionally biased region" description="Basic and acidic residues" evidence="4">
    <location>
        <begin position="83"/>
        <end position="93"/>
    </location>
</feature>
<feature type="compositionally biased region" description="Low complexity" evidence="4">
    <location>
        <begin position="189"/>
        <end position="199"/>
    </location>
</feature>
<feature type="compositionally biased region" description="Polar residues" evidence="4">
    <location>
        <begin position="285"/>
        <end position="328"/>
    </location>
</feature>
<feature type="splice variant" id="VSP_060333" description="In isoform 2.">
    <location>
        <begin position="142"/>
        <end position="298"/>
    </location>
</feature>
<reference key="1">
    <citation type="journal article" date="2013" name="Nature">
        <title>The zebrafish reference genome sequence and its relationship to the human genome.</title>
        <authorList>
            <person name="Howe K."/>
            <person name="Clark M.D."/>
            <person name="Torroja C.F."/>
            <person name="Torrance J."/>
            <person name="Berthelot C."/>
            <person name="Muffato M."/>
            <person name="Collins J.E."/>
            <person name="Humphray S."/>
            <person name="McLaren K."/>
            <person name="Matthews L."/>
            <person name="McLaren S."/>
            <person name="Sealy I."/>
            <person name="Caccamo M."/>
            <person name="Churcher C."/>
            <person name="Scott C."/>
            <person name="Barrett J.C."/>
            <person name="Koch R."/>
            <person name="Rauch G.J."/>
            <person name="White S."/>
            <person name="Chow W."/>
            <person name="Kilian B."/>
            <person name="Quintais L.T."/>
            <person name="Guerra-Assuncao J.A."/>
            <person name="Zhou Y."/>
            <person name="Gu Y."/>
            <person name="Yen J."/>
            <person name="Vogel J.H."/>
            <person name="Eyre T."/>
            <person name="Redmond S."/>
            <person name="Banerjee R."/>
            <person name="Chi J."/>
            <person name="Fu B."/>
            <person name="Langley E."/>
            <person name="Maguire S.F."/>
            <person name="Laird G.K."/>
            <person name="Lloyd D."/>
            <person name="Kenyon E."/>
            <person name="Donaldson S."/>
            <person name="Sehra H."/>
            <person name="Almeida-King J."/>
            <person name="Loveland J."/>
            <person name="Trevanion S."/>
            <person name="Jones M."/>
            <person name="Quail M."/>
            <person name="Willey D."/>
            <person name="Hunt A."/>
            <person name="Burton J."/>
            <person name="Sims S."/>
            <person name="McLay K."/>
            <person name="Plumb B."/>
            <person name="Davis J."/>
            <person name="Clee C."/>
            <person name="Oliver K."/>
            <person name="Clark R."/>
            <person name="Riddle C."/>
            <person name="Elliot D."/>
            <person name="Threadgold G."/>
            <person name="Harden G."/>
            <person name="Ware D."/>
            <person name="Begum S."/>
            <person name="Mortimore B."/>
            <person name="Kerry G."/>
            <person name="Heath P."/>
            <person name="Phillimore B."/>
            <person name="Tracey A."/>
            <person name="Corby N."/>
            <person name="Dunn M."/>
            <person name="Johnson C."/>
            <person name="Wood J."/>
            <person name="Clark S."/>
            <person name="Pelan S."/>
            <person name="Griffiths G."/>
            <person name="Smith M."/>
            <person name="Glithero R."/>
            <person name="Howden P."/>
            <person name="Barker N."/>
            <person name="Lloyd C."/>
            <person name="Stevens C."/>
            <person name="Harley J."/>
            <person name="Holt K."/>
            <person name="Panagiotidis G."/>
            <person name="Lovell J."/>
            <person name="Beasley H."/>
            <person name="Henderson C."/>
            <person name="Gordon D."/>
            <person name="Auger K."/>
            <person name="Wright D."/>
            <person name="Collins J."/>
            <person name="Raisen C."/>
            <person name="Dyer L."/>
            <person name="Leung K."/>
            <person name="Robertson L."/>
            <person name="Ambridge K."/>
            <person name="Leongamornlert D."/>
            <person name="McGuire S."/>
            <person name="Gilderthorp R."/>
            <person name="Griffiths C."/>
            <person name="Manthravadi D."/>
            <person name="Nichol S."/>
            <person name="Barker G."/>
            <person name="Whitehead S."/>
            <person name="Kay M."/>
            <person name="Brown J."/>
            <person name="Murnane C."/>
            <person name="Gray E."/>
            <person name="Humphries M."/>
            <person name="Sycamore N."/>
            <person name="Barker D."/>
            <person name="Saunders D."/>
            <person name="Wallis J."/>
            <person name="Babbage A."/>
            <person name="Hammond S."/>
            <person name="Mashreghi-Mohammadi M."/>
            <person name="Barr L."/>
            <person name="Martin S."/>
            <person name="Wray P."/>
            <person name="Ellington A."/>
            <person name="Matthews N."/>
            <person name="Ellwood M."/>
            <person name="Woodmansey R."/>
            <person name="Clark G."/>
            <person name="Cooper J."/>
            <person name="Tromans A."/>
            <person name="Grafham D."/>
            <person name="Skuce C."/>
            <person name="Pandian R."/>
            <person name="Andrews R."/>
            <person name="Harrison E."/>
            <person name="Kimberley A."/>
            <person name="Garnett J."/>
            <person name="Fosker N."/>
            <person name="Hall R."/>
            <person name="Garner P."/>
            <person name="Kelly D."/>
            <person name="Bird C."/>
            <person name="Palmer S."/>
            <person name="Gehring I."/>
            <person name="Berger A."/>
            <person name="Dooley C.M."/>
            <person name="Ersan-Urun Z."/>
            <person name="Eser C."/>
            <person name="Geiger H."/>
            <person name="Geisler M."/>
            <person name="Karotki L."/>
            <person name="Kirn A."/>
            <person name="Konantz J."/>
            <person name="Konantz M."/>
            <person name="Oberlander M."/>
            <person name="Rudolph-Geiger S."/>
            <person name="Teucke M."/>
            <person name="Lanz C."/>
            <person name="Raddatz G."/>
            <person name="Osoegawa K."/>
            <person name="Zhu B."/>
            <person name="Rapp A."/>
            <person name="Widaa S."/>
            <person name="Langford C."/>
            <person name="Yang F."/>
            <person name="Schuster S.C."/>
            <person name="Carter N.P."/>
            <person name="Harrow J."/>
            <person name="Ning Z."/>
            <person name="Herrero J."/>
            <person name="Searle S.M."/>
            <person name="Enright A."/>
            <person name="Geisler R."/>
            <person name="Plasterk R.H."/>
            <person name="Lee C."/>
            <person name="Westerfield M."/>
            <person name="de Jong P.J."/>
            <person name="Zon L.I."/>
            <person name="Postlethwait J.H."/>
            <person name="Nusslein-Volhard C."/>
            <person name="Hubbard T.J."/>
            <person name="Roest Crollius H."/>
            <person name="Rogers J."/>
            <person name="Stemple D.L."/>
        </authorList>
    </citation>
    <scope>NUCLEOTIDE SEQUENCE [LARGE SCALE GENOMIC DNA]</scope>
    <source>
        <strain>Tuebingen</strain>
    </source>
</reference>
<reference key="2">
    <citation type="submission" date="2003-01" db="EMBL/GenBank/DDBJ databases">
        <authorList>
            <consortium name="NIH - Zebrafish Gene Collection (ZGC) project"/>
        </authorList>
    </citation>
    <scope>NUCLEOTIDE SEQUENCE [LARGE SCALE MRNA] (ISOFORM 2)</scope>
</reference>
<reference key="3">
    <citation type="journal article" date="2019" name="Am. J. Hum. Genet.">
        <title>Truncating mutations in UBAP1 cause hereditary spastic paraplegia.</title>
        <authorList>
            <person name="Farazi Fard M.A."/>
            <person name="Rebelo A.P."/>
            <person name="Buglo E."/>
            <person name="Nemati H."/>
            <person name="Dastsooz H."/>
            <person name="Gehweiler I."/>
            <person name="Reich S."/>
            <person name="Reichbauer J."/>
            <person name="Quintans B."/>
            <person name="Ordonez-Ugalde A."/>
            <person name="Cortese A."/>
            <person name="Courel S."/>
            <person name="Abreu L."/>
            <person name="Powell E."/>
            <person name="Danzi M.C."/>
            <person name="Martuscelli N.B."/>
            <person name="Bis-Brewer D.M."/>
            <person name="Tao F."/>
            <person name="Zarei F."/>
            <person name="Habibzadeh P."/>
            <person name="Yavarian M."/>
            <person name="Modarresi F."/>
            <person name="Silawi M."/>
            <person name="Tabatabaei Z."/>
            <person name="Yousefi M."/>
            <person name="Farpour H.R."/>
            <person name="Kessler C."/>
            <person name="Mangold E."/>
            <person name="Kobeleva X."/>
            <person name="Tournev I."/>
            <person name="Chamova T."/>
            <person name="Mueller A.J."/>
            <person name="Haack T.B."/>
            <person name="Tarnopolsky M."/>
            <person name="Gan-Or Z."/>
            <person name="Rouleau G.A."/>
            <person name="Synofzik M."/>
            <person name="Sobrido M.J."/>
            <person name="Jordanova A."/>
            <person name="Schuele R."/>
            <person name="Zuchner S."/>
            <person name="Faghihi M.A."/>
        </authorList>
    </citation>
    <scope>DISRUPTION PHENOTYPE</scope>
</reference>
<reference key="4">
    <citation type="journal article" date="2019" name="Brain">
        <title>Stop-gain mutations in UBAP1 cause pure autosomal-dominant spastic paraplegia.</title>
        <authorList>
            <person name="Lin X."/>
            <person name="Su H.Z."/>
            <person name="Dong E.L."/>
            <person name="Lin X.H."/>
            <person name="Zhao M."/>
            <person name="Yang C."/>
            <person name="Wang C."/>
            <person name="Wang J."/>
            <person name="Chen Y.J."/>
            <person name="Yu H."/>
            <person name="Xu J."/>
            <person name="Ma L.X."/>
            <person name="Xiong Z.Q."/>
            <person name="Wang N."/>
            <person name="Chen W.J."/>
        </authorList>
    </citation>
    <scope>DISRUPTION PHENOTYPE</scope>
</reference>
<gene>
    <name evidence="7 8" type="primary">ubap1</name>
</gene>
<name>UBAP1_DANRE</name>
<protein>
    <recommendedName>
        <fullName evidence="7">Ubiquitin-associated protein 1</fullName>
        <shortName evidence="7">UBAP-1</shortName>
    </recommendedName>
</protein>
<dbReference type="EMBL" id="CU694487">
    <property type="status" value="NOT_ANNOTATED_CDS"/>
    <property type="molecule type" value="Genomic_DNA"/>
</dbReference>
<dbReference type="EMBL" id="BC046008">
    <property type="protein sequence ID" value="AAH46008.1"/>
    <property type="molecule type" value="mRNA"/>
</dbReference>
<dbReference type="RefSeq" id="NP_001315273.1">
    <molecule id="F6P6X0-1"/>
    <property type="nucleotide sequence ID" value="NM_001328344.1"/>
</dbReference>
<dbReference type="SMR" id="F6P6X0"/>
<dbReference type="FunCoup" id="F6P6X0">
    <property type="interactions" value="1321"/>
</dbReference>
<dbReference type="STRING" id="7955.ENSDARP00000076116"/>
<dbReference type="Ensembl" id="ENSDART00000081676">
    <molecule id="F6P6X0-1"/>
    <property type="protein sequence ID" value="ENSDARP00000076116"/>
    <property type="gene ID" value="ENSDARG00000058746"/>
</dbReference>
<dbReference type="GeneID" id="393183"/>
<dbReference type="KEGG" id="dre:393183"/>
<dbReference type="AGR" id="ZFIN:ZDB-GENE-040426-950"/>
<dbReference type="CTD" id="51271"/>
<dbReference type="ZFIN" id="ZDB-GENE-040426-950">
    <property type="gene designation" value="ubap1"/>
</dbReference>
<dbReference type="HOGENOM" id="CLU_943213_0_0_1"/>
<dbReference type="InParanoid" id="F6P6X0"/>
<dbReference type="OMA" id="ENWKPWP"/>
<dbReference type="OrthoDB" id="2018023at2759"/>
<dbReference type="TreeFam" id="TF329247"/>
<dbReference type="Reactome" id="R-DRE-917729">
    <property type="pathway name" value="Endosomal Sorting Complex Required For Transport (ESCRT)"/>
</dbReference>
<dbReference type="PRO" id="PR:F6P6X0"/>
<dbReference type="Proteomes" id="UP000000437">
    <property type="component" value="Chromosome 21"/>
</dbReference>
<dbReference type="Bgee" id="ENSDARG00000058746">
    <property type="expression patterns" value="Expressed in cleaving embryo and 29 other cell types or tissues"/>
</dbReference>
<dbReference type="GO" id="GO:0005829">
    <property type="term" value="C:cytosol"/>
    <property type="evidence" value="ECO:0007669"/>
    <property type="project" value="UniProtKB-SubCell"/>
</dbReference>
<dbReference type="GO" id="GO:0000813">
    <property type="term" value="C:ESCRT I complex"/>
    <property type="evidence" value="ECO:0000318"/>
    <property type="project" value="GO_Central"/>
</dbReference>
<dbReference type="GO" id="GO:0043130">
    <property type="term" value="F:ubiquitin binding"/>
    <property type="evidence" value="ECO:0000318"/>
    <property type="project" value="GO_Central"/>
</dbReference>
<dbReference type="GO" id="GO:0048675">
    <property type="term" value="P:axon extension"/>
    <property type="evidence" value="ECO:0000315"/>
    <property type="project" value="ZFIN"/>
</dbReference>
<dbReference type="GO" id="GO:0015031">
    <property type="term" value="P:protein transport"/>
    <property type="evidence" value="ECO:0007669"/>
    <property type="project" value="UniProtKB-KW"/>
</dbReference>
<dbReference type="GO" id="GO:0043162">
    <property type="term" value="P:ubiquitin-dependent protein catabolic process via the multivesicular body sorting pathway"/>
    <property type="evidence" value="ECO:0000318"/>
    <property type="project" value="GO_Central"/>
</dbReference>
<dbReference type="CDD" id="cd14315">
    <property type="entry name" value="UBA1_UBAP1"/>
    <property type="match status" value="1"/>
</dbReference>
<dbReference type="CDD" id="cd14316">
    <property type="entry name" value="UBA2_UBAP1_like"/>
    <property type="match status" value="1"/>
</dbReference>
<dbReference type="FunFam" id="1.20.120.1920:FF:000001">
    <property type="entry name" value="Ubiquitin associated protein 1"/>
    <property type="match status" value="1"/>
</dbReference>
<dbReference type="Gene3D" id="1.20.120.1920">
    <property type="entry name" value="UBAP1 SOUBA domain"/>
    <property type="match status" value="1"/>
</dbReference>
<dbReference type="InterPro" id="IPR015940">
    <property type="entry name" value="UBA"/>
</dbReference>
<dbReference type="InterPro" id="IPR009060">
    <property type="entry name" value="UBA-like_sf"/>
</dbReference>
<dbReference type="InterPro" id="IPR049467">
    <property type="entry name" value="UBAP-1-like_UBA2"/>
</dbReference>
<dbReference type="InterPro" id="IPR038870">
    <property type="entry name" value="UBAP1"/>
</dbReference>
<dbReference type="InterPro" id="IPR042575">
    <property type="entry name" value="UBAP1_C"/>
</dbReference>
<dbReference type="InterPro" id="IPR023340">
    <property type="entry name" value="UMA"/>
</dbReference>
<dbReference type="PANTHER" id="PTHR15960">
    <property type="entry name" value="LD44032P"/>
    <property type="match status" value="1"/>
</dbReference>
<dbReference type="PANTHER" id="PTHR15960:SF2">
    <property type="entry name" value="UBIQUITIN-ASSOCIATED PROTEIN 1"/>
    <property type="match status" value="1"/>
</dbReference>
<dbReference type="Pfam" id="PF22567">
    <property type="entry name" value="UBA_9"/>
    <property type="match status" value="1"/>
</dbReference>
<dbReference type="Pfam" id="PF21267">
    <property type="entry name" value="UBAP-1_UBA2"/>
    <property type="match status" value="1"/>
</dbReference>
<dbReference type="SMART" id="SM00165">
    <property type="entry name" value="UBA"/>
    <property type="match status" value="2"/>
</dbReference>
<dbReference type="SUPFAM" id="SSF46934">
    <property type="entry name" value="UBA-like"/>
    <property type="match status" value="2"/>
</dbReference>
<dbReference type="PROSITE" id="PS50030">
    <property type="entry name" value="UBA"/>
    <property type="match status" value="2"/>
</dbReference>
<dbReference type="PROSITE" id="PS51497">
    <property type="entry name" value="UMA"/>
    <property type="match status" value="1"/>
</dbReference>